<name>NAPA_LARHH</name>
<comment type="function">
    <text evidence="1">Catalytic subunit of the periplasmic nitrate reductase complex NapAB. Receives electrons from NapB and catalyzes the reduction of nitrate to nitrite.</text>
</comment>
<comment type="catalytic activity">
    <reaction evidence="1">
        <text>2 Fe(II)-[cytochrome] + nitrate + 2 H(+) = 2 Fe(III)-[cytochrome] + nitrite + H2O</text>
        <dbReference type="Rhea" id="RHEA:12909"/>
        <dbReference type="Rhea" id="RHEA-COMP:11777"/>
        <dbReference type="Rhea" id="RHEA-COMP:11778"/>
        <dbReference type="ChEBI" id="CHEBI:15377"/>
        <dbReference type="ChEBI" id="CHEBI:15378"/>
        <dbReference type="ChEBI" id="CHEBI:16301"/>
        <dbReference type="ChEBI" id="CHEBI:17632"/>
        <dbReference type="ChEBI" id="CHEBI:29033"/>
        <dbReference type="ChEBI" id="CHEBI:29034"/>
        <dbReference type="EC" id="1.9.6.1"/>
    </reaction>
</comment>
<comment type="cofactor">
    <cofactor evidence="1">
        <name>[4Fe-4S] cluster</name>
        <dbReference type="ChEBI" id="CHEBI:49883"/>
    </cofactor>
    <text evidence="1">Binds 1 [4Fe-4S] cluster.</text>
</comment>
<comment type="cofactor">
    <cofactor evidence="1">
        <name>Mo-bis(molybdopterin guanine dinucleotide)</name>
        <dbReference type="ChEBI" id="CHEBI:60539"/>
    </cofactor>
    <text evidence="1">Binds 1 molybdenum-bis(molybdopterin guanine dinucleotide) (Mo-bis-MGD) cofactor per subunit.</text>
</comment>
<comment type="subunit">
    <text evidence="1">Component of the periplasmic nitrate reductase NapAB complex composed of NapA and NapB.</text>
</comment>
<comment type="subcellular location">
    <subcellularLocation>
        <location evidence="1">Periplasm</location>
    </subcellularLocation>
</comment>
<comment type="PTM">
    <text evidence="1">Predicted to be exported by the Tat system. The position of the signal peptide cleavage has not been experimentally proven.</text>
</comment>
<comment type="similarity">
    <text evidence="1">Belongs to the prokaryotic molybdopterin-containing oxidoreductase family. NasA/NapA/NarB subfamily.</text>
</comment>
<sequence length="839" mass="94304">MTLTRRDFIKANAAAAAATAAAVNLPLVPSMAQAATTDPATAGADIKWDKAACRFCGTGCSVLVGTKGGRVVATQGDPDAPVNRGLNCIKGYFLSKIMYGEDRLTKPLLRMKNGKFDKNGEFTPVTWKQAFDVMEEKFKTAMKAGGPEAVAMFGSGQWTIWEGYAAAKFMKAGLRSNNLDPNARHCMASAVVGFMRTFNMDEPMGCYDDIEKADAFVLWGSNMAEMHPILWSRITDRRLTHPDCQVHVLSTYEHRSFELADNKLVFGPQTDLAILNYIANHIIQTGAVNKDFIQKYCAFMKGDTDIGYGLRPTHPKQKAAKNPDSGKMDPITFEQFAAFVKPYTLEYTARTSCVPAERLKRLAELYADPKKKVVSFWTMGFNQHTRGTWANNLVYNIHLLTGKISTPGCGPFSLTGQPSACGTAREVGTFAHRLPADLVVMNPEHRKIAENIWKLPEGTIPPKMGLHAVAMQRALKDSKLKVYWQQCNNNMQAGPNINEEMYPGWRNPETFIIVSDPYPTVSAMAADLILPTAMWVEKEGAYGNAERRTQFWRQQVNAPGEAKSDLWQVVEFSKRFKVEEVWPAELVAKKPEYRGKTLYDVLFANGQVNKYKLDDMARQHGTAYHNEEARHVGFYLQKGLFEEYAAFGRGHGHDLALFDTYHKARGLRWPVVDGKETLWRYREGFDPYVKKGEGVRFYGQKDGRARIIALPFEPAAEVPDREYNMWLCTGRVLEHWHTGSMTRRVPELYRAVPDAQVFMHPADAELRGLKRGQQVKVISRRGEITLTLETRGRNKPPQGLVFIPFFDEGRLVNKLTLDATCPLSKETDYKKCAVKVVRA</sequence>
<keyword id="KW-0004">4Fe-4S</keyword>
<keyword id="KW-0249">Electron transport</keyword>
<keyword id="KW-0408">Iron</keyword>
<keyword id="KW-0411">Iron-sulfur</keyword>
<keyword id="KW-0479">Metal-binding</keyword>
<keyword id="KW-0500">Molybdenum</keyword>
<keyword id="KW-0534">Nitrate assimilation</keyword>
<keyword id="KW-0560">Oxidoreductase</keyword>
<keyword id="KW-0574">Periplasm</keyword>
<keyword id="KW-1185">Reference proteome</keyword>
<keyword id="KW-0732">Signal</keyword>
<keyword id="KW-0813">Transport</keyword>
<reference key="1">
    <citation type="journal article" date="2009" name="PLoS Genet.">
        <title>The complete genome and proteome of Laribacter hongkongensis reveal potential mechanisms for adaptations to different temperatures and habitats.</title>
        <authorList>
            <person name="Woo P.C.Y."/>
            <person name="Lau S.K.P."/>
            <person name="Tse H."/>
            <person name="Teng J.L.L."/>
            <person name="Curreem S.O."/>
            <person name="Tsang A.K.L."/>
            <person name="Fan R.Y.Y."/>
            <person name="Wong G.K.M."/>
            <person name="Huang Y."/>
            <person name="Loman N.J."/>
            <person name="Snyder L.A.S."/>
            <person name="Cai J.J."/>
            <person name="Huang J.-D."/>
            <person name="Mak W."/>
            <person name="Pallen M.J."/>
            <person name="Lok S."/>
            <person name="Yuen K.-Y."/>
        </authorList>
    </citation>
    <scope>NUCLEOTIDE SEQUENCE [LARGE SCALE GENOMIC DNA]</scope>
    <source>
        <strain>HLHK9</strain>
    </source>
</reference>
<gene>
    <name evidence="1" type="primary">napA</name>
    <name type="ordered locus">LHK_02081</name>
</gene>
<proteinExistence type="inferred from homology"/>
<organism>
    <name type="scientific">Laribacter hongkongensis (strain HLHK9)</name>
    <dbReference type="NCBI Taxonomy" id="557598"/>
    <lineage>
        <taxon>Bacteria</taxon>
        <taxon>Pseudomonadati</taxon>
        <taxon>Pseudomonadota</taxon>
        <taxon>Betaproteobacteria</taxon>
        <taxon>Neisseriales</taxon>
        <taxon>Aquaspirillaceae</taxon>
        <taxon>Laribacter</taxon>
    </lineage>
</organism>
<evidence type="ECO:0000255" key="1">
    <source>
        <dbReference type="HAMAP-Rule" id="MF_01630"/>
    </source>
</evidence>
<dbReference type="EC" id="1.9.6.1" evidence="1"/>
<dbReference type="EMBL" id="CP001154">
    <property type="protein sequence ID" value="ACO75065.1"/>
    <property type="molecule type" value="Genomic_DNA"/>
</dbReference>
<dbReference type="RefSeq" id="WP_012697551.1">
    <property type="nucleotide sequence ID" value="NC_012559.1"/>
</dbReference>
<dbReference type="SMR" id="C1D9G3"/>
<dbReference type="STRING" id="557598.LHK_02081"/>
<dbReference type="KEGG" id="lhk:LHK_02081"/>
<dbReference type="eggNOG" id="COG0243">
    <property type="taxonomic scope" value="Bacteria"/>
</dbReference>
<dbReference type="HOGENOM" id="CLU_000422_13_4_4"/>
<dbReference type="Proteomes" id="UP000002010">
    <property type="component" value="Chromosome"/>
</dbReference>
<dbReference type="GO" id="GO:0016020">
    <property type="term" value="C:membrane"/>
    <property type="evidence" value="ECO:0007669"/>
    <property type="project" value="TreeGrafter"/>
</dbReference>
<dbReference type="GO" id="GO:0009325">
    <property type="term" value="C:nitrate reductase complex"/>
    <property type="evidence" value="ECO:0007669"/>
    <property type="project" value="TreeGrafter"/>
</dbReference>
<dbReference type="GO" id="GO:0042597">
    <property type="term" value="C:periplasmic space"/>
    <property type="evidence" value="ECO:0007669"/>
    <property type="project" value="UniProtKB-SubCell"/>
</dbReference>
<dbReference type="GO" id="GO:0051539">
    <property type="term" value="F:4 iron, 4 sulfur cluster binding"/>
    <property type="evidence" value="ECO:0007669"/>
    <property type="project" value="UniProtKB-KW"/>
</dbReference>
<dbReference type="GO" id="GO:0009055">
    <property type="term" value="F:electron transfer activity"/>
    <property type="evidence" value="ECO:0007669"/>
    <property type="project" value="UniProtKB-UniRule"/>
</dbReference>
<dbReference type="GO" id="GO:0005506">
    <property type="term" value="F:iron ion binding"/>
    <property type="evidence" value="ECO:0007669"/>
    <property type="project" value="UniProtKB-UniRule"/>
</dbReference>
<dbReference type="GO" id="GO:0030151">
    <property type="term" value="F:molybdenum ion binding"/>
    <property type="evidence" value="ECO:0007669"/>
    <property type="project" value="InterPro"/>
</dbReference>
<dbReference type="GO" id="GO:0043546">
    <property type="term" value="F:molybdopterin cofactor binding"/>
    <property type="evidence" value="ECO:0007669"/>
    <property type="project" value="InterPro"/>
</dbReference>
<dbReference type="GO" id="GO:0050140">
    <property type="term" value="F:nitrate reductase (cytochrome) activity"/>
    <property type="evidence" value="ECO:0007669"/>
    <property type="project" value="UniProtKB-EC"/>
</dbReference>
<dbReference type="GO" id="GO:0045333">
    <property type="term" value="P:cellular respiration"/>
    <property type="evidence" value="ECO:0007669"/>
    <property type="project" value="UniProtKB-ARBA"/>
</dbReference>
<dbReference type="GO" id="GO:0006777">
    <property type="term" value="P:Mo-molybdopterin cofactor biosynthetic process"/>
    <property type="evidence" value="ECO:0007669"/>
    <property type="project" value="UniProtKB-UniRule"/>
</dbReference>
<dbReference type="GO" id="GO:0042128">
    <property type="term" value="P:nitrate assimilation"/>
    <property type="evidence" value="ECO:0007669"/>
    <property type="project" value="UniProtKB-UniRule"/>
</dbReference>
<dbReference type="CDD" id="cd02791">
    <property type="entry name" value="MopB_CT_Nitrate-R-NapA-like"/>
    <property type="match status" value="1"/>
</dbReference>
<dbReference type="CDD" id="cd02754">
    <property type="entry name" value="MopB_Nitrate-R-NapA-like"/>
    <property type="match status" value="1"/>
</dbReference>
<dbReference type="FunFam" id="2.40.40.20:FF:000005">
    <property type="entry name" value="Periplasmic nitrate reductase"/>
    <property type="match status" value="1"/>
</dbReference>
<dbReference type="Gene3D" id="2.40.40.20">
    <property type="match status" value="1"/>
</dbReference>
<dbReference type="Gene3D" id="3.30.200.210">
    <property type="match status" value="1"/>
</dbReference>
<dbReference type="Gene3D" id="3.40.50.740">
    <property type="match status" value="1"/>
</dbReference>
<dbReference type="Gene3D" id="3.40.228.10">
    <property type="entry name" value="Dimethylsulfoxide Reductase, domain 2"/>
    <property type="match status" value="1"/>
</dbReference>
<dbReference type="HAMAP" id="MF_01630">
    <property type="entry name" value="Nitrate_reduct_NapA"/>
    <property type="match status" value="1"/>
</dbReference>
<dbReference type="InterPro" id="IPR009010">
    <property type="entry name" value="Asp_de-COase-like_dom_sf"/>
</dbReference>
<dbReference type="InterPro" id="IPR041957">
    <property type="entry name" value="CT_Nitrate-R-NapA-like"/>
</dbReference>
<dbReference type="InterPro" id="IPR006657">
    <property type="entry name" value="MoPterin_dinucl-bd_dom"/>
</dbReference>
<dbReference type="InterPro" id="IPR006656">
    <property type="entry name" value="Mopterin_OxRdtase"/>
</dbReference>
<dbReference type="InterPro" id="IPR006963">
    <property type="entry name" value="Mopterin_OxRdtase_4Fe-4S_dom"/>
</dbReference>
<dbReference type="InterPro" id="IPR010051">
    <property type="entry name" value="Periplasm_NO3_reductase_lsu"/>
</dbReference>
<dbReference type="InterPro" id="IPR050123">
    <property type="entry name" value="Prok_molybdopt-oxidoreductase"/>
</dbReference>
<dbReference type="InterPro" id="IPR006311">
    <property type="entry name" value="TAT_signal"/>
</dbReference>
<dbReference type="InterPro" id="IPR019546">
    <property type="entry name" value="TAT_signal_bac_arc"/>
</dbReference>
<dbReference type="NCBIfam" id="TIGR01706">
    <property type="entry name" value="NAPA"/>
    <property type="match status" value="1"/>
</dbReference>
<dbReference type="NCBIfam" id="NF010055">
    <property type="entry name" value="PRK13532.1"/>
    <property type="match status" value="1"/>
</dbReference>
<dbReference type="NCBIfam" id="TIGR01409">
    <property type="entry name" value="TAT_signal_seq"/>
    <property type="match status" value="1"/>
</dbReference>
<dbReference type="PANTHER" id="PTHR43105:SF11">
    <property type="entry name" value="PERIPLASMIC NITRATE REDUCTASE"/>
    <property type="match status" value="1"/>
</dbReference>
<dbReference type="PANTHER" id="PTHR43105">
    <property type="entry name" value="RESPIRATORY NITRATE REDUCTASE"/>
    <property type="match status" value="1"/>
</dbReference>
<dbReference type="Pfam" id="PF04879">
    <property type="entry name" value="Molybdop_Fe4S4"/>
    <property type="match status" value="1"/>
</dbReference>
<dbReference type="Pfam" id="PF00384">
    <property type="entry name" value="Molybdopterin"/>
    <property type="match status" value="1"/>
</dbReference>
<dbReference type="Pfam" id="PF01568">
    <property type="entry name" value="Molydop_binding"/>
    <property type="match status" value="1"/>
</dbReference>
<dbReference type="SMART" id="SM00926">
    <property type="entry name" value="Molybdop_Fe4S4"/>
    <property type="match status" value="1"/>
</dbReference>
<dbReference type="SUPFAM" id="SSF50692">
    <property type="entry name" value="ADC-like"/>
    <property type="match status" value="1"/>
</dbReference>
<dbReference type="SUPFAM" id="SSF53706">
    <property type="entry name" value="Formate dehydrogenase/DMSO reductase, domains 1-3"/>
    <property type="match status" value="1"/>
</dbReference>
<dbReference type="PROSITE" id="PS51669">
    <property type="entry name" value="4FE4S_MOW_BIS_MGD"/>
    <property type="match status" value="1"/>
</dbReference>
<dbReference type="PROSITE" id="PS51318">
    <property type="entry name" value="TAT"/>
    <property type="match status" value="1"/>
</dbReference>
<accession>C1D9G3</accession>
<feature type="signal peptide" description="Tat-type signal" evidence="1">
    <location>
        <begin position="1"/>
        <end position="34"/>
    </location>
</feature>
<feature type="chain" id="PRO_1000186366" description="Periplasmic nitrate reductase" evidence="1">
    <location>
        <begin position="35"/>
        <end position="839"/>
    </location>
</feature>
<feature type="domain" description="4Fe-4S Mo/W bis-MGD-type" evidence="1">
    <location>
        <begin position="46"/>
        <end position="102"/>
    </location>
</feature>
<feature type="binding site" evidence="1">
    <location>
        <position position="53"/>
    </location>
    <ligand>
        <name>[4Fe-4S] cluster</name>
        <dbReference type="ChEBI" id="CHEBI:49883"/>
    </ligand>
</feature>
<feature type="binding site" evidence="1">
    <location>
        <position position="56"/>
    </location>
    <ligand>
        <name>[4Fe-4S] cluster</name>
        <dbReference type="ChEBI" id="CHEBI:49883"/>
    </ligand>
</feature>
<feature type="binding site" evidence="1">
    <location>
        <position position="60"/>
    </location>
    <ligand>
        <name>[4Fe-4S] cluster</name>
        <dbReference type="ChEBI" id="CHEBI:49883"/>
    </ligand>
</feature>
<feature type="binding site" evidence="1">
    <location>
        <position position="88"/>
    </location>
    <ligand>
        <name>[4Fe-4S] cluster</name>
        <dbReference type="ChEBI" id="CHEBI:49883"/>
    </ligand>
</feature>
<feature type="binding site" evidence="1">
    <location>
        <position position="90"/>
    </location>
    <ligand>
        <name>Mo-bis(molybdopterin guanine dinucleotide)</name>
        <dbReference type="ChEBI" id="CHEBI:60539"/>
    </ligand>
</feature>
<feature type="binding site" evidence="1">
    <location>
        <position position="157"/>
    </location>
    <ligand>
        <name>Mo-bis(molybdopterin guanine dinucleotide)</name>
        <dbReference type="ChEBI" id="CHEBI:60539"/>
    </ligand>
</feature>
<feature type="binding site" evidence="1">
    <location>
        <position position="182"/>
    </location>
    <ligand>
        <name>Mo-bis(molybdopterin guanine dinucleotide)</name>
        <dbReference type="ChEBI" id="CHEBI:60539"/>
    </ligand>
</feature>
<feature type="binding site" evidence="1">
    <location>
        <position position="186"/>
    </location>
    <ligand>
        <name>Mo-bis(molybdopterin guanine dinucleotide)</name>
        <dbReference type="ChEBI" id="CHEBI:60539"/>
    </ligand>
</feature>
<feature type="binding site" evidence="1">
    <location>
        <begin position="219"/>
        <end position="226"/>
    </location>
    <ligand>
        <name>Mo-bis(molybdopterin guanine dinucleotide)</name>
        <dbReference type="ChEBI" id="CHEBI:60539"/>
    </ligand>
</feature>
<feature type="binding site" evidence="1">
    <location>
        <begin position="250"/>
        <end position="254"/>
    </location>
    <ligand>
        <name>Mo-bis(molybdopterin guanine dinucleotide)</name>
        <dbReference type="ChEBI" id="CHEBI:60539"/>
    </ligand>
</feature>
<feature type="binding site" evidence="1">
    <location>
        <begin position="269"/>
        <end position="271"/>
    </location>
    <ligand>
        <name>Mo-bis(molybdopterin guanine dinucleotide)</name>
        <dbReference type="ChEBI" id="CHEBI:60539"/>
    </ligand>
</feature>
<feature type="binding site" evidence="1">
    <location>
        <position position="379"/>
    </location>
    <ligand>
        <name>Mo-bis(molybdopterin guanine dinucleotide)</name>
        <dbReference type="ChEBI" id="CHEBI:60539"/>
    </ligand>
</feature>
<feature type="binding site" evidence="1">
    <location>
        <position position="383"/>
    </location>
    <ligand>
        <name>Mo-bis(molybdopterin guanine dinucleotide)</name>
        <dbReference type="ChEBI" id="CHEBI:60539"/>
    </ligand>
</feature>
<feature type="binding site" evidence="1">
    <location>
        <position position="489"/>
    </location>
    <ligand>
        <name>Mo-bis(molybdopterin guanine dinucleotide)</name>
        <dbReference type="ChEBI" id="CHEBI:60539"/>
    </ligand>
</feature>
<feature type="binding site" evidence="1">
    <location>
        <begin position="515"/>
        <end position="516"/>
    </location>
    <ligand>
        <name>Mo-bis(molybdopterin guanine dinucleotide)</name>
        <dbReference type="ChEBI" id="CHEBI:60539"/>
    </ligand>
</feature>
<feature type="binding site" evidence="1">
    <location>
        <position position="538"/>
    </location>
    <ligand>
        <name>Mo-bis(molybdopterin guanine dinucleotide)</name>
        <dbReference type="ChEBI" id="CHEBI:60539"/>
    </ligand>
</feature>
<feature type="binding site" evidence="1">
    <location>
        <position position="565"/>
    </location>
    <ligand>
        <name>Mo-bis(molybdopterin guanine dinucleotide)</name>
        <dbReference type="ChEBI" id="CHEBI:60539"/>
    </ligand>
</feature>
<feature type="binding site" evidence="1">
    <location>
        <begin position="729"/>
        <end position="738"/>
    </location>
    <ligand>
        <name>Mo-bis(molybdopterin guanine dinucleotide)</name>
        <dbReference type="ChEBI" id="CHEBI:60539"/>
    </ligand>
</feature>
<feature type="binding site" evidence="1">
    <location>
        <position position="805"/>
    </location>
    <ligand>
        <name>substrate</name>
    </ligand>
</feature>
<feature type="binding site" evidence="1">
    <location>
        <position position="813"/>
    </location>
    <ligand>
        <name>Mo-bis(molybdopterin guanine dinucleotide)</name>
        <dbReference type="ChEBI" id="CHEBI:60539"/>
    </ligand>
</feature>
<feature type="binding site" evidence="1">
    <location>
        <position position="830"/>
    </location>
    <ligand>
        <name>Mo-bis(molybdopterin guanine dinucleotide)</name>
        <dbReference type="ChEBI" id="CHEBI:60539"/>
    </ligand>
</feature>
<protein>
    <recommendedName>
        <fullName evidence="1">Periplasmic nitrate reductase</fullName>
        <ecNumber evidence="1">1.9.6.1</ecNumber>
    </recommendedName>
</protein>